<reference evidence="5" key="1">
    <citation type="journal article" date="2004" name="Nature">
        <title>Genome sequence of the Brown Norway rat yields insights into mammalian evolution.</title>
        <authorList>
            <person name="Gibbs R.A."/>
            <person name="Weinstock G.M."/>
            <person name="Metzker M.L."/>
            <person name="Muzny D.M."/>
            <person name="Sodergren E.J."/>
            <person name="Scherer S."/>
            <person name="Scott G."/>
            <person name="Steffen D."/>
            <person name="Worley K.C."/>
            <person name="Burch P.E."/>
            <person name="Okwuonu G."/>
            <person name="Hines S."/>
            <person name="Lewis L."/>
            <person name="Deramo C."/>
            <person name="Delgado O."/>
            <person name="Dugan-Rocha S."/>
            <person name="Miner G."/>
            <person name="Morgan M."/>
            <person name="Hawes A."/>
            <person name="Gill R."/>
            <person name="Holt R.A."/>
            <person name="Adams M.D."/>
            <person name="Amanatides P.G."/>
            <person name="Baden-Tillson H."/>
            <person name="Barnstead M."/>
            <person name="Chin S."/>
            <person name="Evans C.A."/>
            <person name="Ferriera S."/>
            <person name="Fosler C."/>
            <person name="Glodek A."/>
            <person name="Gu Z."/>
            <person name="Jennings D."/>
            <person name="Kraft C.L."/>
            <person name="Nguyen T."/>
            <person name="Pfannkoch C.M."/>
            <person name="Sitter C."/>
            <person name="Sutton G.G."/>
            <person name="Venter J.C."/>
            <person name="Woodage T."/>
            <person name="Smith D."/>
            <person name="Lee H.-M."/>
            <person name="Gustafson E."/>
            <person name="Cahill P."/>
            <person name="Kana A."/>
            <person name="Doucette-Stamm L."/>
            <person name="Weinstock K."/>
            <person name="Fechtel K."/>
            <person name="Weiss R.B."/>
            <person name="Dunn D.M."/>
            <person name="Green E.D."/>
            <person name="Blakesley R.W."/>
            <person name="Bouffard G.G."/>
            <person name="De Jong P.J."/>
            <person name="Osoegawa K."/>
            <person name="Zhu B."/>
            <person name="Marra M."/>
            <person name="Schein J."/>
            <person name="Bosdet I."/>
            <person name="Fjell C."/>
            <person name="Jones S."/>
            <person name="Krzywinski M."/>
            <person name="Mathewson C."/>
            <person name="Siddiqui A."/>
            <person name="Wye N."/>
            <person name="McPherson J."/>
            <person name="Zhao S."/>
            <person name="Fraser C.M."/>
            <person name="Shetty J."/>
            <person name="Shatsman S."/>
            <person name="Geer K."/>
            <person name="Chen Y."/>
            <person name="Abramzon S."/>
            <person name="Nierman W.C."/>
            <person name="Havlak P.H."/>
            <person name="Chen R."/>
            <person name="Durbin K.J."/>
            <person name="Egan A."/>
            <person name="Ren Y."/>
            <person name="Song X.-Z."/>
            <person name="Li B."/>
            <person name="Liu Y."/>
            <person name="Qin X."/>
            <person name="Cawley S."/>
            <person name="Cooney A.J."/>
            <person name="D'Souza L.M."/>
            <person name="Martin K."/>
            <person name="Wu J.Q."/>
            <person name="Gonzalez-Garay M.L."/>
            <person name="Jackson A.R."/>
            <person name="Kalafus K.J."/>
            <person name="McLeod M.P."/>
            <person name="Milosavljevic A."/>
            <person name="Virk D."/>
            <person name="Volkov A."/>
            <person name="Wheeler D.A."/>
            <person name="Zhang Z."/>
            <person name="Bailey J.A."/>
            <person name="Eichler E.E."/>
            <person name="Tuzun E."/>
            <person name="Birney E."/>
            <person name="Mongin E."/>
            <person name="Ureta-Vidal A."/>
            <person name="Woodwark C."/>
            <person name="Zdobnov E."/>
            <person name="Bork P."/>
            <person name="Suyama M."/>
            <person name="Torrents D."/>
            <person name="Alexandersson M."/>
            <person name="Trask B.J."/>
            <person name="Young J.M."/>
            <person name="Huang H."/>
            <person name="Wang H."/>
            <person name="Xing H."/>
            <person name="Daniels S."/>
            <person name="Gietzen D."/>
            <person name="Schmidt J."/>
            <person name="Stevens K."/>
            <person name="Vitt U."/>
            <person name="Wingrove J."/>
            <person name="Camara F."/>
            <person name="Mar Alba M."/>
            <person name="Abril J.F."/>
            <person name="Guigo R."/>
            <person name="Smit A."/>
            <person name="Dubchak I."/>
            <person name="Rubin E.M."/>
            <person name="Couronne O."/>
            <person name="Poliakov A."/>
            <person name="Huebner N."/>
            <person name="Ganten D."/>
            <person name="Goesele C."/>
            <person name="Hummel O."/>
            <person name="Kreitler T."/>
            <person name="Lee Y.-A."/>
            <person name="Monti J."/>
            <person name="Schulz H."/>
            <person name="Zimdahl H."/>
            <person name="Himmelbauer H."/>
            <person name="Lehrach H."/>
            <person name="Jacob H.J."/>
            <person name="Bromberg S."/>
            <person name="Gullings-Handley J."/>
            <person name="Jensen-Seaman M.I."/>
            <person name="Kwitek A.E."/>
            <person name="Lazar J."/>
            <person name="Pasko D."/>
            <person name="Tonellato P.J."/>
            <person name="Twigger S."/>
            <person name="Ponting C.P."/>
            <person name="Duarte J.M."/>
            <person name="Rice S."/>
            <person name="Goodstadt L."/>
            <person name="Beatson S.A."/>
            <person name="Emes R.D."/>
            <person name="Winter E.E."/>
            <person name="Webber C."/>
            <person name="Brandt P."/>
            <person name="Nyakatura G."/>
            <person name="Adetobi M."/>
            <person name="Chiaromonte F."/>
            <person name="Elnitski L."/>
            <person name="Eswara P."/>
            <person name="Hardison R.C."/>
            <person name="Hou M."/>
            <person name="Kolbe D."/>
            <person name="Makova K."/>
            <person name="Miller W."/>
            <person name="Nekrutenko A."/>
            <person name="Riemer C."/>
            <person name="Schwartz S."/>
            <person name="Taylor J."/>
            <person name="Yang S."/>
            <person name="Zhang Y."/>
            <person name="Lindpaintner K."/>
            <person name="Andrews T.D."/>
            <person name="Caccamo M."/>
            <person name="Clamp M."/>
            <person name="Clarke L."/>
            <person name="Curwen V."/>
            <person name="Durbin R.M."/>
            <person name="Eyras E."/>
            <person name="Searle S.M."/>
            <person name="Cooper G.M."/>
            <person name="Batzoglou S."/>
            <person name="Brudno M."/>
            <person name="Sidow A."/>
            <person name="Stone E.A."/>
            <person name="Payseur B.A."/>
            <person name="Bourque G."/>
            <person name="Lopez-Otin C."/>
            <person name="Puente X.S."/>
            <person name="Chakrabarti K."/>
            <person name="Chatterji S."/>
            <person name="Dewey C."/>
            <person name="Pachter L."/>
            <person name="Bray N."/>
            <person name="Yap V.B."/>
            <person name="Caspi A."/>
            <person name="Tesler G."/>
            <person name="Pevzner P.A."/>
            <person name="Haussler D."/>
            <person name="Roskin K.M."/>
            <person name="Baertsch R."/>
            <person name="Clawson H."/>
            <person name="Furey T.S."/>
            <person name="Hinrichs A.S."/>
            <person name="Karolchik D."/>
            <person name="Kent W.J."/>
            <person name="Rosenbloom K.R."/>
            <person name="Trumbower H."/>
            <person name="Weirauch M."/>
            <person name="Cooper D.N."/>
            <person name="Stenson P.D."/>
            <person name="Ma B."/>
            <person name="Brent M."/>
            <person name="Arumugam M."/>
            <person name="Shteynberg D."/>
            <person name="Copley R.R."/>
            <person name="Taylor M.S."/>
            <person name="Riethman H."/>
            <person name="Mudunuri U."/>
            <person name="Peterson J."/>
            <person name="Guyer M."/>
            <person name="Felsenfeld A."/>
            <person name="Old S."/>
            <person name="Mockrin S."/>
            <person name="Collins F.S."/>
        </authorList>
    </citation>
    <scope>NUCLEOTIDE SEQUENCE [LARGE SCALE GENOMIC DNA]</scope>
    <source>
        <strain evidence="4">Brown Norway</strain>
    </source>
</reference>
<reference evidence="5 6" key="2">
    <citation type="journal article" date="2004" name="Genome Res.">
        <title>The status, quality, and expansion of the NIH full-length cDNA project: the Mammalian Gene Collection (MGC).</title>
        <authorList>
            <consortium name="The MGC Project Team"/>
        </authorList>
    </citation>
    <scope>NUCLEOTIDE SEQUENCE [LARGE SCALE MRNA] OF 143-812</scope>
    <source>
        <strain evidence="6">Brown Norway</strain>
        <tissue evidence="6">Testis</tissue>
    </source>
</reference>
<reference key="3">
    <citation type="journal article" date="2012" name="Nat. Commun.">
        <title>Quantitative maps of protein phosphorylation sites across 14 different rat organs and tissues.</title>
        <authorList>
            <person name="Lundby A."/>
            <person name="Secher A."/>
            <person name="Lage K."/>
            <person name="Nordsborg N.B."/>
            <person name="Dmytriyev A."/>
            <person name="Lundby C."/>
            <person name="Olsen J.V."/>
        </authorList>
    </citation>
    <scope>PHOSPHORYLATION [LARGE SCALE ANALYSIS] AT SER-125 AND SER-133</scope>
    <scope>IDENTIFICATION BY MASS SPECTROMETRY [LARGE SCALE ANALYSIS]</scope>
</reference>
<comment type="function">
    <text evidence="1">May be involved in the later stages of fibrous sheath biogenesis. Binds calcium (By similarity).</text>
</comment>
<comment type="subunit">
    <text evidence="1">Interacts with CABYR.</text>
</comment>
<comment type="subcellular location">
    <subcellularLocation>
        <location evidence="1">Cell projection</location>
        <location evidence="1">Cilium</location>
        <location evidence="1">Flagellum</location>
    </subcellularLocation>
    <text evidence="1">Localizes to cortex of the fibrous sheath including the surface of the longitudinal columns and ribs of the principal piece of sperm flagella.</text>
</comment>
<sequence>MEESDEPEQPISLGRQEYRRRRLPSQPMVDKSQQTEIGEKKKGMAAVQPPAPKATHSIGNIPGGKANYSGKEYESLILSSQLQQTWMKRKQGQEMTDKSFQTDTSVEEKVEVIFMDKALEENSASVGEIAPASPQGVSEVEIPTSRPPSLLIDRAQQTSCTGDWSLISICSKDKVDKEQQTYFSELETTVKSMPGSSLIKSKEETVPIAEDGSLVEIDGSLEIEVLSTEKIPDVVMSFTEGEISGELQAVPDDEATVKAEHFFTEETSIQAPSLAKETSAAETTAKTPKEFVDIQALPADELSSTEPPADIRPPLVKGTLSEEPSDQQYPKGTVVAPSELPVEDLVPLSEEVLEKVQALAIDTILDDSGRAESTTVEEATGEVQPPLSEEITKEVPAEVHLPIATHSKEIVIIIDKEFAIDEDFEDQPPFITEVAEDEATAEVQPPSAEDAPEEVAPSEVLPPPTEQGTVEHMTAEVLSPSTEVGPAEVPPLPTEEWPLPPVTEESPAEVTPPETEEGPIEPAEEGPEDGLLLPTEEIPSEVQPPSLEKVPLEEVVIPQAEEVPLDDLPIEVQPLPAENIAGWVPDEFQAFPVDEYPAREDTVEVQPSSLESAPIEESSVEAQLLAAEADTAEIEETPTEVAPAEDQLLPAEEVVLKVEVATAWSPLSELPPAEEATVEAQLTSVEESLKRTSVDVQPPPLDTLAEESPAVKQPLKTDVVPMPEFPGEEMTAQDPLPPSVKTTVDQDLLKEHQLPEIADISQVKLEYTTFTGDKKSKGTDSVPEDVTGIKDDQISTFKIEGTIKIELKNSTS</sequence>
<name>FSCB_RAT</name>
<evidence type="ECO:0000250" key="1">
    <source>
        <dbReference type="UniProtKB" id="A1EGX6"/>
    </source>
</evidence>
<evidence type="ECO:0000250" key="2">
    <source>
        <dbReference type="UniProtKB" id="Q5H9T9"/>
    </source>
</evidence>
<evidence type="ECO:0000256" key="3">
    <source>
        <dbReference type="SAM" id="MobiDB-lite"/>
    </source>
</evidence>
<evidence type="ECO:0000269" key="4">
    <source>
    </source>
</evidence>
<evidence type="ECO:0000305" key="5"/>
<evidence type="ECO:0000312" key="6">
    <source>
        <dbReference type="EMBL" id="AAH98054.1"/>
    </source>
</evidence>
<evidence type="ECO:0007744" key="7">
    <source>
    </source>
</evidence>
<proteinExistence type="evidence at protein level"/>
<dbReference type="EMBL" id="AABR03049340">
    <property type="status" value="NOT_ANNOTATED_CDS"/>
    <property type="molecule type" value="Genomic_DNA"/>
</dbReference>
<dbReference type="EMBL" id="BC098054">
    <property type="protein sequence ID" value="AAH98054.1"/>
    <property type="molecule type" value="mRNA"/>
</dbReference>
<dbReference type="RefSeq" id="NP_001258036.1">
    <property type="nucleotide sequence ID" value="NM_001271107.1"/>
</dbReference>
<dbReference type="FunCoup" id="Q4V7A4">
    <property type="interactions" value="1"/>
</dbReference>
<dbReference type="STRING" id="10116.ENSRNOP00000051161"/>
<dbReference type="iPTMnet" id="Q4V7A4"/>
<dbReference type="PhosphoSitePlus" id="Q4V7A4"/>
<dbReference type="PaxDb" id="10116-ENSRNOP00000051161"/>
<dbReference type="GeneID" id="500659"/>
<dbReference type="KEGG" id="rno:500659"/>
<dbReference type="UCSC" id="RGD:1561721">
    <property type="organism name" value="rat"/>
</dbReference>
<dbReference type="AGR" id="RGD:1561721"/>
<dbReference type="CTD" id="84075"/>
<dbReference type="RGD" id="1561721">
    <property type="gene designation" value="Fscb"/>
</dbReference>
<dbReference type="eggNOG" id="ENOG502S90R">
    <property type="taxonomic scope" value="Eukaryota"/>
</dbReference>
<dbReference type="HOGENOM" id="CLU_407057_0_0_1"/>
<dbReference type="InParanoid" id="Q4V7A4"/>
<dbReference type="OrthoDB" id="92356at9989"/>
<dbReference type="PhylomeDB" id="Q4V7A4"/>
<dbReference type="TreeFam" id="TF336897"/>
<dbReference type="PRO" id="PR:Q4V7A4"/>
<dbReference type="Proteomes" id="UP000002494">
    <property type="component" value="Chromosome 6"/>
</dbReference>
<dbReference type="Bgee" id="ENSRNOG00000032241">
    <property type="expression patterns" value="Expressed in testis"/>
</dbReference>
<dbReference type="GO" id="GO:0035686">
    <property type="term" value="C:sperm fibrous sheath"/>
    <property type="evidence" value="ECO:0000266"/>
    <property type="project" value="RGD"/>
</dbReference>
<dbReference type="GO" id="GO:0097228">
    <property type="term" value="C:sperm principal piece"/>
    <property type="evidence" value="ECO:0000266"/>
    <property type="project" value="RGD"/>
</dbReference>
<dbReference type="GO" id="GO:0005509">
    <property type="term" value="F:calcium ion binding"/>
    <property type="evidence" value="ECO:0000266"/>
    <property type="project" value="RGD"/>
</dbReference>
<dbReference type="GO" id="GO:0033234">
    <property type="term" value="P:negative regulation of protein sumoylation"/>
    <property type="evidence" value="ECO:0000250"/>
    <property type="project" value="UniProtKB"/>
</dbReference>
<dbReference type="InterPro" id="IPR043375">
    <property type="entry name" value="FSCB"/>
</dbReference>
<dbReference type="PANTHER" id="PTHR36135">
    <property type="entry name" value="FIBROUS SHEATH CABYR-BINDING PROTEIN"/>
    <property type="match status" value="1"/>
</dbReference>
<dbReference type="PANTHER" id="PTHR36135:SF1">
    <property type="entry name" value="FIBROUS SHEATH CABYR-BINDING PROTEIN"/>
    <property type="match status" value="1"/>
</dbReference>
<organism>
    <name type="scientific">Rattus norvegicus</name>
    <name type="common">Rat</name>
    <dbReference type="NCBI Taxonomy" id="10116"/>
    <lineage>
        <taxon>Eukaryota</taxon>
        <taxon>Metazoa</taxon>
        <taxon>Chordata</taxon>
        <taxon>Craniata</taxon>
        <taxon>Vertebrata</taxon>
        <taxon>Euteleostomi</taxon>
        <taxon>Mammalia</taxon>
        <taxon>Eutheria</taxon>
        <taxon>Euarchontoglires</taxon>
        <taxon>Glires</taxon>
        <taxon>Rodentia</taxon>
        <taxon>Myomorpha</taxon>
        <taxon>Muroidea</taxon>
        <taxon>Muridae</taxon>
        <taxon>Murinae</taxon>
        <taxon>Rattus</taxon>
    </lineage>
</organism>
<accession>Q4V7A4</accession>
<protein>
    <recommendedName>
        <fullName>Fibrous sheath CABYR-binding protein</fullName>
    </recommendedName>
</protein>
<feature type="chain" id="PRO_0000331226" description="Fibrous sheath CABYR-binding protein">
    <location>
        <begin position="1"/>
        <end position="812"/>
    </location>
</feature>
<feature type="region of interest" description="Disordered" evidence="3">
    <location>
        <begin position="1"/>
        <end position="66"/>
    </location>
</feature>
<feature type="region of interest" description="Disordered" evidence="3">
    <location>
        <begin position="269"/>
        <end position="333"/>
    </location>
</feature>
<feature type="region of interest" description="Disordered" evidence="3">
    <location>
        <begin position="367"/>
        <end position="388"/>
    </location>
</feature>
<feature type="region of interest" description="Disordered" evidence="3">
    <location>
        <begin position="424"/>
        <end position="547"/>
    </location>
</feature>
<feature type="region of interest" description="Disordered" evidence="3">
    <location>
        <begin position="672"/>
        <end position="741"/>
    </location>
</feature>
<feature type="compositionally biased region" description="Low complexity" evidence="3">
    <location>
        <begin position="275"/>
        <end position="286"/>
    </location>
</feature>
<feature type="compositionally biased region" description="Pro residues" evidence="3">
    <location>
        <begin position="488"/>
        <end position="501"/>
    </location>
</feature>
<feature type="compositionally biased region" description="Low complexity" evidence="3">
    <location>
        <begin position="502"/>
        <end position="513"/>
    </location>
</feature>
<feature type="compositionally biased region" description="Acidic residues" evidence="3">
    <location>
        <begin position="514"/>
        <end position="528"/>
    </location>
</feature>
<feature type="modified residue" description="Phosphoserine" evidence="1">
    <location>
        <position position="25"/>
    </location>
</feature>
<feature type="modified residue" description="Phosphoserine" evidence="1">
    <location>
        <position position="57"/>
    </location>
</feature>
<feature type="modified residue" description="Phosphoserine" evidence="7">
    <location>
        <position position="125"/>
    </location>
</feature>
<feature type="modified residue" description="Phosphoserine" evidence="7">
    <location>
        <position position="133"/>
    </location>
</feature>
<feature type="modified residue" description="Phosphoserine" evidence="1">
    <location>
        <position position="184"/>
    </location>
</feature>
<feature type="modified residue" description="Phosphoserine" evidence="1">
    <location>
        <position position="273"/>
    </location>
</feature>
<keyword id="KW-0106">Calcium</keyword>
<keyword id="KW-0966">Cell projection</keyword>
<keyword id="KW-0969">Cilium</keyword>
<keyword id="KW-0282">Flagellum</keyword>
<keyword id="KW-0597">Phosphoprotein</keyword>
<keyword id="KW-1185">Reference proteome</keyword>
<gene>
    <name evidence="2" type="primary">Fscb</name>
</gene>